<protein>
    <recommendedName>
        <fullName>Eggshell protein</fullName>
    </recommendedName>
    <alternativeName>
        <fullName>Chorion protein</fullName>
    </alternativeName>
</protein>
<keyword id="KW-1185">Reference proteome</keyword>
<keyword id="KW-0677">Repeat</keyword>
<keyword id="KW-0732">Signal</keyword>
<evidence type="ECO:0000256" key="1">
    <source>
        <dbReference type="SAM" id="MobiDB-lite"/>
    </source>
</evidence>
<reference key="1">
    <citation type="journal article" date="1987" name="Nucleic Acids Res.">
        <title>Sequences of two genomic fragments containing an identical coding region for a putative egg-shell precursor protein of Schistosoma mansoni.</title>
        <authorList>
            <person name="Kunz W."/>
            <person name="Opatz K."/>
            <person name="Finken M."/>
            <person name="Symmons P."/>
        </authorList>
    </citation>
    <scope>NUCLEOTIDE SEQUENCE [GENOMIC DNA]</scope>
    <source>
        <strain>Liberian</strain>
    </source>
</reference>
<feature type="signal peptide">
    <location>
        <begin position="1"/>
        <end position="18"/>
    </location>
</feature>
<feature type="chain" id="PRO_0000021151" description="Eggshell protein">
    <location>
        <begin position="19"/>
        <end position="173"/>
    </location>
</feature>
<feature type="region of interest" description="Disordered" evidence="1">
    <location>
        <begin position="145"/>
        <end position="173"/>
    </location>
</feature>
<feature type="compositionally biased region" description="Gly residues" evidence="1">
    <location>
        <begin position="145"/>
        <end position="162"/>
    </location>
</feature>
<sequence length="173" mass="15976">MKQSLTLVFLVAIGYATAHTTSHDYSGGYGGGCYGSDCDSGYGDSGYGGGCTGGDCGGGYGGGCSGGDCGNYGGGYGGDCNGGDCGNYGGGYGGGNGGGCSGGNCGGGFDEAFPAPYGGDYGNGGNGFGKGGSKGNNYGKGYGGGSGKGKGGGKGGKGGKGGTYKPSHYGGGY</sequence>
<proteinExistence type="evidence at transcript level"/>
<dbReference type="EMBL" id="X05841">
    <property type="protein sequence ID" value="CAA29284.1"/>
    <property type="molecule type" value="Genomic_DNA"/>
</dbReference>
<dbReference type="EMBL" id="X05842">
    <property type="protein sequence ID" value="CAA29285.1"/>
    <property type="status" value="ALT_SEQ"/>
    <property type="molecule type" value="Genomic_DNA"/>
</dbReference>
<dbReference type="InParanoid" id="P06649"/>
<dbReference type="Proteomes" id="UP000008854">
    <property type="component" value="Unassembled WGS sequence"/>
</dbReference>
<dbReference type="PRINTS" id="PR01228">
    <property type="entry name" value="EGGSHELL"/>
</dbReference>
<organism>
    <name type="scientific">Schistosoma mansoni</name>
    <name type="common">Blood fluke</name>
    <dbReference type="NCBI Taxonomy" id="6183"/>
    <lineage>
        <taxon>Eukaryota</taxon>
        <taxon>Metazoa</taxon>
        <taxon>Spiralia</taxon>
        <taxon>Lophotrochozoa</taxon>
        <taxon>Platyhelminthes</taxon>
        <taxon>Trematoda</taxon>
        <taxon>Digenea</taxon>
        <taxon>Strigeidida</taxon>
        <taxon>Schistosomatoidea</taxon>
        <taxon>Schistosomatidae</taxon>
        <taxon>Schistosoma</taxon>
    </lineage>
</organism>
<name>EGG1_SCHMA</name>
<accession>P06649</accession>
<comment type="developmental stage">
    <text>Expression correlates with egg production.</text>
</comment>